<organism>
    <name type="scientific">Methanococcus vannielii (strain ATCC 35089 / DSM 1224 / JCM 13029 / OCM 148 / SB)</name>
    <dbReference type="NCBI Taxonomy" id="406327"/>
    <lineage>
        <taxon>Archaea</taxon>
        <taxon>Methanobacteriati</taxon>
        <taxon>Methanobacteriota</taxon>
        <taxon>Methanomada group</taxon>
        <taxon>Methanococci</taxon>
        <taxon>Methanococcales</taxon>
        <taxon>Methanococcaceae</taxon>
        <taxon>Methanococcus</taxon>
    </lineage>
</organism>
<name>CARA_METVS</name>
<reference key="1">
    <citation type="submission" date="2007-06" db="EMBL/GenBank/DDBJ databases">
        <title>Complete sequence of Methanococcus vannielii SB.</title>
        <authorList>
            <consortium name="US DOE Joint Genome Institute"/>
            <person name="Copeland A."/>
            <person name="Lucas S."/>
            <person name="Lapidus A."/>
            <person name="Barry K."/>
            <person name="Glavina del Rio T."/>
            <person name="Dalin E."/>
            <person name="Tice H."/>
            <person name="Pitluck S."/>
            <person name="Chain P."/>
            <person name="Malfatti S."/>
            <person name="Shin M."/>
            <person name="Vergez L."/>
            <person name="Schmutz J."/>
            <person name="Larimer F."/>
            <person name="Land M."/>
            <person name="Hauser L."/>
            <person name="Kyrpides N."/>
            <person name="Anderson I."/>
            <person name="Sieprawska-Lupa M."/>
            <person name="Whitman W.B."/>
            <person name="Richardson P."/>
        </authorList>
    </citation>
    <scope>NUCLEOTIDE SEQUENCE [LARGE SCALE GENOMIC DNA]</scope>
    <source>
        <strain>ATCC 35089 / DSM 1224 / JCM 13029 / OCM 148 / SB</strain>
    </source>
</reference>
<dbReference type="EC" id="6.3.5.5" evidence="1"/>
<dbReference type="EMBL" id="CP000742">
    <property type="protein sequence ID" value="ABR54806.1"/>
    <property type="molecule type" value="Genomic_DNA"/>
</dbReference>
<dbReference type="RefSeq" id="WP_011972707.1">
    <property type="nucleotide sequence ID" value="NC_009634.1"/>
</dbReference>
<dbReference type="SMR" id="A6UQN4"/>
<dbReference type="STRING" id="406327.Mevan_0901"/>
<dbReference type="GeneID" id="5326147"/>
<dbReference type="KEGG" id="mvn:Mevan_0901"/>
<dbReference type="eggNOG" id="arCOG00064">
    <property type="taxonomic scope" value="Archaea"/>
</dbReference>
<dbReference type="HOGENOM" id="CLU_035901_2_1_2"/>
<dbReference type="OrthoDB" id="7675at2157"/>
<dbReference type="UniPathway" id="UPA00068">
    <property type="reaction ID" value="UER00171"/>
</dbReference>
<dbReference type="UniPathway" id="UPA00070">
    <property type="reaction ID" value="UER00115"/>
</dbReference>
<dbReference type="Proteomes" id="UP000001107">
    <property type="component" value="Chromosome"/>
</dbReference>
<dbReference type="GO" id="GO:0005524">
    <property type="term" value="F:ATP binding"/>
    <property type="evidence" value="ECO:0007669"/>
    <property type="project" value="UniProtKB-UniRule"/>
</dbReference>
<dbReference type="GO" id="GO:0004088">
    <property type="term" value="F:carbamoyl-phosphate synthase (glutamine-hydrolyzing) activity"/>
    <property type="evidence" value="ECO:0007669"/>
    <property type="project" value="UniProtKB-UniRule"/>
</dbReference>
<dbReference type="GO" id="GO:0004359">
    <property type="term" value="F:glutaminase activity"/>
    <property type="evidence" value="ECO:0007669"/>
    <property type="project" value="RHEA"/>
</dbReference>
<dbReference type="GO" id="GO:0006207">
    <property type="term" value="P:'de novo' pyrimidine nucleobase biosynthetic process"/>
    <property type="evidence" value="ECO:0007669"/>
    <property type="project" value="InterPro"/>
</dbReference>
<dbReference type="GO" id="GO:0044205">
    <property type="term" value="P:'de novo' UMP biosynthetic process"/>
    <property type="evidence" value="ECO:0007669"/>
    <property type="project" value="UniProtKB-UniRule"/>
</dbReference>
<dbReference type="GO" id="GO:0006541">
    <property type="term" value="P:glutamine metabolic process"/>
    <property type="evidence" value="ECO:0007669"/>
    <property type="project" value="InterPro"/>
</dbReference>
<dbReference type="GO" id="GO:0006526">
    <property type="term" value="P:L-arginine biosynthetic process"/>
    <property type="evidence" value="ECO:0007669"/>
    <property type="project" value="UniProtKB-UniRule"/>
</dbReference>
<dbReference type="CDD" id="cd01744">
    <property type="entry name" value="GATase1_CPSase"/>
    <property type="match status" value="1"/>
</dbReference>
<dbReference type="Gene3D" id="3.40.50.880">
    <property type="match status" value="1"/>
</dbReference>
<dbReference type="Gene3D" id="3.50.30.20">
    <property type="entry name" value="Carbamoyl-phosphate synthase small subunit, N-terminal domain"/>
    <property type="match status" value="1"/>
</dbReference>
<dbReference type="HAMAP" id="MF_01209">
    <property type="entry name" value="CPSase_S_chain"/>
    <property type="match status" value="1"/>
</dbReference>
<dbReference type="InterPro" id="IPR050472">
    <property type="entry name" value="Anth_synth/Amidotransfase"/>
</dbReference>
<dbReference type="InterPro" id="IPR006274">
    <property type="entry name" value="CarbamoylP_synth_ssu"/>
</dbReference>
<dbReference type="InterPro" id="IPR002474">
    <property type="entry name" value="CarbamoylP_synth_ssu_N"/>
</dbReference>
<dbReference type="InterPro" id="IPR036480">
    <property type="entry name" value="CarbP_synth_ssu_N_sf"/>
</dbReference>
<dbReference type="InterPro" id="IPR029062">
    <property type="entry name" value="Class_I_gatase-like"/>
</dbReference>
<dbReference type="InterPro" id="IPR035686">
    <property type="entry name" value="CPSase_GATase1"/>
</dbReference>
<dbReference type="InterPro" id="IPR017926">
    <property type="entry name" value="GATASE"/>
</dbReference>
<dbReference type="NCBIfam" id="TIGR01368">
    <property type="entry name" value="CPSaseIIsmall"/>
    <property type="match status" value="1"/>
</dbReference>
<dbReference type="NCBIfam" id="NF009475">
    <property type="entry name" value="PRK12838.1"/>
    <property type="match status" value="1"/>
</dbReference>
<dbReference type="PANTHER" id="PTHR43418:SF7">
    <property type="entry name" value="CARBAMOYL-PHOSPHATE SYNTHASE SMALL CHAIN"/>
    <property type="match status" value="1"/>
</dbReference>
<dbReference type="PANTHER" id="PTHR43418">
    <property type="entry name" value="MULTIFUNCTIONAL TRYPTOPHAN BIOSYNTHESIS PROTEIN-RELATED"/>
    <property type="match status" value="1"/>
</dbReference>
<dbReference type="Pfam" id="PF00988">
    <property type="entry name" value="CPSase_sm_chain"/>
    <property type="match status" value="1"/>
</dbReference>
<dbReference type="Pfam" id="PF00117">
    <property type="entry name" value="GATase"/>
    <property type="match status" value="1"/>
</dbReference>
<dbReference type="PRINTS" id="PR00097">
    <property type="entry name" value="ANTSNTHASEII"/>
</dbReference>
<dbReference type="PRINTS" id="PR00099">
    <property type="entry name" value="CPSGATASE"/>
</dbReference>
<dbReference type="PRINTS" id="PR00096">
    <property type="entry name" value="GATASE"/>
</dbReference>
<dbReference type="SMART" id="SM01097">
    <property type="entry name" value="CPSase_sm_chain"/>
    <property type="match status" value="1"/>
</dbReference>
<dbReference type="SUPFAM" id="SSF52021">
    <property type="entry name" value="Carbamoyl phosphate synthetase, small subunit N-terminal domain"/>
    <property type="match status" value="1"/>
</dbReference>
<dbReference type="SUPFAM" id="SSF52317">
    <property type="entry name" value="Class I glutamine amidotransferase-like"/>
    <property type="match status" value="1"/>
</dbReference>
<dbReference type="PROSITE" id="PS51273">
    <property type="entry name" value="GATASE_TYPE_1"/>
    <property type="match status" value="1"/>
</dbReference>
<comment type="function">
    <text evidence="1">Small subunit of the glutamine-dependent carbamoyl phosphate synthetase (CPSase). CPSase catalyzes the formation of carbamoyl phosphate from the ammonia moiety of glutamine, carbonate, and phosphate donated by ATP, constituting the first step of 2 biosynthetic pathways, one leading to arginine and/or urea and the other to pyrimidine nucleotides. The small subunit (glutamine amidotransferase) binds and cleaves glutamine to supply the large subunit with the substrate ammonia.</text>
</comment>
<comment type="catalytic activity">
    <reaction evidence="1">
        <text>hydrogencarbonate + L-glutamine + 2 ATP + H2O = carbamoyl phosphate + L-glutamate + 2 ADP + phosphate + 2 H(+)</text>
        <dbReference type="Rhea" id="RHEA:18633"/>
        <dbReference type="ChEBI" id="CHEBI:15377"/>
        <dbReference type="ChEBI" id="CHEBI:15378"/>
        <dbReference type="ChEBI" id="CHEBI:17544"/>
        <dbReference type="ChEBI" id="CHEBI:29985"/>
        <dbReference type="ChEBI" id="CHEBI:30616"/>
        <dbReference type="ChEBI" id="CHEBI:43474"/>
        <dbReference type="ChEBI" id="CHEBI:58228"/>
        <dbReference type="ChEBI" id="CHEBI:58359"/>
        <dbReference type="ChEBI" id="CHEBI:456216"/>
        <dbReference type="EC" id="6.3.5.5"/>
    </reaction>
</comment>
<comment type="catalytic activity">
    <molecule>Carbamoyl phosphate synthase small chain</molecule>
    <reaction evidence="1">
        <text>L-glutamine + H2O = L-glutamate + NH4(+)</text>
        <dbReference type="Rhea" id="RHEA:15889"/>
        <dbReference type="ChEBI" id="CHEBI:15377"/>
        <dbReference type="ChEBI" id="CHEBI:28938"/>
        <dbReference type="ChEBI" id="CHEBI:29985"/>
        <dbReference type="ChEBI" id="CHEBI:58359"/>
    </reaction>
</comment>
<comment type="pathway">
    <text evidence="1">Amino-acid biosynthesis; L-arginine biosynthesis; carbamoyl phosphate from bicarbonate: step 1/1.</text>
</comment>
<comment type="pathway">
    <text evidence="1">Pyrimidine metabolism; UMP biosynthesis via de novo pathway; (S)-dihydroorotate from bicarbonate: step 1/3.</text>
</comment>
<comment type="subunit">
    <text evidence="1">Composed of two chains; the small (or glutamine) chain promotes the hydrolysis of glutamine to ammonia, which is used by the large (or ammonia) chain to synthesize carbamoyl phosphate. Tetramer of heterodimers (alpha,beta)4.</text>
</comment>
<comment type="similarity">
    <text evidence="1">Belongs to the CarA family.</text>
</comment>
<gene>
    <name evidence="1" type="primary">carA</name>
    <name type="ordered locus">Mevan_0901</name>
</gene>
<evidence type="ECO:0000255" key="1">
    <source>
        <dbReference type="HAMAP-Rule" id="MF_01209"/>
    </source>
</evidence>
<keyword id="KW-0028">Amino-acid biosynthesis</keyword>
<keyword id="KW-0055">Arginine biosynthesis</keyword>
<keyword id="KW-0067">ATP-binding</keyword>
<keyword id="KW-0315">Glutamine amidotransferase</keyword>
<keyword id="KW-0436">Ligase</keyword>
<keyword id="KW-0547">Nucleotide-binding</keyword>
<keyword id="KW-0665">Pyrimidine biosynthesis</keyword>
<protein>
    <recommendedName>
        <fullName evidence="1">Carbamoyl phosphate synthase small chain</fullName>
        <ecNumber evidence="1">6.3.5.5</ecNumber>
    </recommendedName>
    <alternativeName>
        <fullName evidence="1">Carbamoyl phosphate synthetase glutamine chain</fullName>
    </alternativeName>
</protein>
<sequence length="369" mass="40562">MYGILVLEDGTIIRGKGFGAEAEVLGELVFNTSMTGYVEILTDPSYNGQIVTMTYPLEGNYGVDKRWFESEGIKAEGFIVKDMTGIELDSFLKEYGVPGISDVDTRFITKKIRSKGVVKSLLKTSATEISEEEEKELVNKVRNYEDISDIDLVPEVSTKKVVKYPAKDEKISCVVIDCGVKQSILNCLLERGCSVVKVPYDTKEEEILSYNPDFVLVSNGPGDPEKMLETANTVKNLFGKLPVTGICLGHQIITIALGGKTYKLKFGHRGGNQPVKDSSTGKVYITSQNHGFATDMSNVPEGSILSHVNLNDDTVEGISKIMDSDNVKGVVWSVQHHPEAGPGPHDAMFLFDDMVALGMKFKQEKTSKR</sequence>
<feature type="chain" id="PRO_1000138872" description="Carbamoyl phosphate synthase small chain">
    <location>
        <begin position="1"/>
        <end position="369"/>
    </location>
</feature>
<feature type="domain" description="Glutamine amidotransferase type-1" evidence="1">
    <location>
        <begin position="172"/>
        <end position="364"/>
    </location>
</feature>
<feature type="region of interest" description="CPSase" evidence="1">
    <location>
        <begin position="1"/>
        <end position="168"/>
    </location>
</feature>
<feature type="active site" description="Nucleophile" evidence="1">
    <location>
        <position position="247"/>
    </location>
</feature>
<feature type="active site" evidence="1">
    <location>
        <position position="337"/>
    </location>
</feature>
<feature type="active site" evidence="1">
    <location>
        <position position="339"/>
    </location>
</feature>
<feature type="binding site" evidence="1">
    <location>
        <position position="45"/>
    </location>
    <ligand>
        <name>L-glutamine</name>
        <dbReference type="ChEBI" id="CHEBI:58359"/>
    </ligand>
</feature>
<feature type="binding site" evidence="1">
    <location>
        <position position="220"/>
    </location>
    <ligand>
        <name>L-glutamine</name>
        <dbReference type="ChEBI" id="CHEBI:58359"/>
    </ligand>
</feature>
<feature type="binding site" evidence="1">
    <location>
        <position position="222"/>
    </location>
    <ligand>
        <name>L-glutamine</name>
        <dbReference type="ChEBI" id="CHEBI:58359"/>
    </ligand>
</feature>
<feature type="binding site" evidence="1">
    <location>
        <position position="248"/>
    </location>
    <ligand>
        <name>L-glutamine</name>
        <dbReference type="ChEBI" id="CHEBI:58359"/>
    </ligand>
</feature>
<feature type="binding site" evidence="1">
    <location>
        <position position="251"/>
    </location>
    <ligand>
        <name>L-glutamine</name>
        <dbReference type="ChEBI" id="CHEBI:58359"/>
    </ligand>
</feature>
<feature type="binding site" evidence="1">
    <location>
        <position position="289"/>
    </location>
    <ligand>
        <name>L-glutamine</name>
        <dbReference type="ChEBI" id="CHEBI:58359"/>
    </ligand>
</feature>
<feature type="binding site" evidence="1">
    <location>
        <position position="291"/>
    </location>
    <ligand>
        <name>L-glutamine</name>
        <dbReference type="ChEBI" id="CHEBI:58359"/>
    </ligand>
</feature>
<feature type="binding site" evidence="1">
    <location>
        <position position="292"/>
    </location>
    <ligand>
        <name>L-glutamine</name>
        <dbReference type="ChEBI" id="CHEBI:58359"/>
    </ligand>
</feature>
<proteinExistence type="inferred from homology"/>
<accession>A6UQN4</accession>